<comment type="subcellular location">
    <subcellularLocation>
        <location>Cell outer membrane</location>
        <topology>Lipid-anchor</topology>
    </subcellularLocation>
</comment>
<protein>
    <recommendedName>
        <fullName>Lipoprotein E</fullName>
    </recommendedName>
    <alternativeName>
        <fullName>Outer membrane protein P4</fullName>
        <shortName>OMP P4</shortName>
    </alternativeName>
</protein>
<organism>
    <name type="scientific">Haemophilus influenzae (strain ATCC 51907 / DSM 11121 / KW20 / Rd)</name>
    <dbReference type="NCBI Taxonomy" id="71421"/>
    <lineage>
        <taxon>Bacteria</taxon>
        <taxon>Pseudomonadati</taxon>
        <taxon>Pseudomonadota</taxon>
        <taxon>Gammaproteobacteria</taxon>
        <taxon>Pasteurellales</taxon>
        <taxon>Pasteurellaceae</taxon>
        <taxon>Haemophilus</taxon>
    </lineage>
</organism>
<keyword id="KW-0002">3D-structure</keyword>
<keyword id="KW-0998">Cell outer membrane</keyword>
<keyword id="KW-0903">Direct protein sequencing</keyword>
<keyword id="KW-0449">Lipoprotein</keyword>
<keyword id="KW-0472">Membrane</keyword>
<keyword id="KW-0564">Palmitate</keyword>
<keyword id="KW-1185">Reference proteome</keyword>
<keyword id="KW-0732">Signal</keyword>
<sequence>MKTTLKMTALAALSAFVLAGCGSHQMKSEGHANMQLQQQAVLGLNWMQDSGEYKALAYQAYNAAKVAFDHAKVAKGKKKAVVADLDETMLDNSPYAGWQVQNNKPFDGKDWTRWVDARQSRAVPGAVEFNNYVNSHNGKVFYVTNRKDSTEKSGTIDDMKRLGFNGVEESAFYLKKDKSAKAARFAEIEKQGYEIVLYVGDNLDDFGNTVYGKLNADRRAFVDQNQGKFGKTFIMLPNANYGGWEGGLAEGYFKKDTQGQIKARLDAVQAWDGK</sequence>
<name>HEL_HAEIN</name>
<gene>
    <name type="primary">hel</name>
    <name type="synonym">ompP4</name>
    <name type="ordered locus">HI_0693</name>
</gene>
<reference key="1">
    <citation type="journal article" date="1991" name="Infect. Immun.">
        <title>The e (P4) outer membrane protein of Haemophilus influenzae: biologic activity of anti-e serum and cloning and sequencing of the structural gene.</title>
        <authorList>
            <person name="Green B.A."/>
            <person name="Farley J.E."/>
            <person name="Quinn-Dey T."/>
            <person name="Deich R.A."/>
            <person name="Zlotnick G.W."/>
        </authorList>
    </citation>
    <scope>NUCLEOTIDE SEQUENCE [GENOMIC DNA]</scope>
    <scope>PROTEIN SEQUENCE OF 263-274</scope>
    <source>
        <strain>RD / KW20B</strain>
    </source>
</reference>
<reference key="2">
    <citation type="journal article" date="1995" name="Science">
        <title>Whole-genome random sequencing and assembly of Haemophilus influenzae Rd.</title>
        <authorList>
            <person name="Fleischmann R.D."/>
            <person name="Adams M.D."/>
            <person name="White O."/>
            <person name="Clayton R.A."/>
            <person name="Kirkness E.F."/>
            <person name="Kerlavage A.R."/>
            <person name="Bult C.J."/>
            <person name="Tomb J.-F."/>
            <person name="Dougherty B.A."/>
            <person name="Merrick J.M."/>
            <person name="McKenney K."/>
            <person name="Sutton G.G."/>
            <person name="FitzHugh W."/>
            <person name="Fields C.A."/>
            <person name="Gocayne J.D."/>
            <person name="Scott J.D."/>
            <person name="Shirley R."/>
            <person name="Liu L.-I."/>
            <person name="Glodek A."/>
            <person name="Kelley J.M."/>
            <person name="Weidman J.F."/>
            <person name="Phillips C.A."/>
            <person name="Spriggs T."/>
            <person name="Hedblom E."/>
            <person name="Cotton M.D."/>
            <person name="Utterback T.R."/>
            <person name="Hanna M.C."/>
            <person name="Nguyen D.T."/>
            <person name="Saudek D.M."/>
            <person name="Brandon R.C."/>
            <person name="Fine L.D."/>
            <person name="Fritchman J.L."/>
            <person name="Fuhrmann J.L."/>
            <person name="Geoghagen N.S.M."/>
            <person name="Gnehm C.L."/>
            <person name="McDonald L.A."/>
            <person name="Small K.V."/>
            <person name="Fraser C.M."/>
            <person name="Smith H.O."/>
            <person name="Venter J.C."/>
        </authorList>
    </citation>
    <scope>NUCLEOTIDE SEQUENCE [LARGE SCALE GENOMIC DNA]</scope>
    <source>
        <strain>ATCC 51907 / DSM 11121 / KW20 / Rd</strain>
    </source>
</reference>
<dbReference type="EMBL" id="M68502">
    <property type="protein sequence ID" value="AAA51009.1"/>
    <property type="molecule type" value="Genomic_DNA"/>
</dbReference>
<dbReference type="EMBL" id="L42023">
    <property type="protein sequence ID" value="AAC22353.1"/>
    <property type="molecule type" value="Genomic_DNA"/>
</dbReference>
<dbReference type="PIR" id="B64087">
    <property type="entry name" value="B64087"/>
</dbReference>
<dbReference type="RefSeq" id="NP_438853.1">
    <property type="nucleotide sequence ID" value="NC_000907.1"/>
</dbReference>
<dbReference type="PDB" id="3OCU">
    <property type="method" value="X-ray"/>
    <property type="resolution" value="1.35 A"/>
    <property type="chains" value="A=22-274"/>
</dbReference>
<dbReference type="PDB" id="3OCV">
    <property type="method" value="X-ray"/>
    <property type="resolution" value="1.55 A"/>
    <property type="chains" value="A=22-274"/>
</dbReference>
<dbReference type="PDB" id="3OCW">
    <property type="method" value="X-ray"/>
    <property type="resolution" value="1.85 A"/>
    <property type="chains" value="A=22-274"/>
</dbReference>
<dbReference type="PDB" id="3OCX">
    <property type="method" value="X-ray"/>
    <property type="resolution" value="1.90 A"/>
    <property type="chains" value="A=22-274"/>
</dbReference>
<dbReference type="PDB" id="3OCY">
    <property type="method" value="X-ray"/>
    <property type="resolution" value="1.40 A"/>
    <property type="chains" value="A=22-274"/>
</dbReference>
<dbReference type="PDB" id="3OCZ">
    <property type="method" value="X-ray"/>
    <property type="resolution" value="1.35 A"/>
    <property type="chains" value="A=22-274"/>
</dbReference>
<dbReference type="PDB" id="3SF0">
    <property type="method" value="X-ray"/>
    <property type="resolution" value="1.35 A"/>
    <property type="chains" value="A=22-274"/>
</dbReference>
<dbReference type="PDBsum" id="3OCU"/>
<dbReference type="PDBsum" id="3OCV"/>
<dbReference type="PDBsum" id="3OCW"/>
<dbReference type="PDBsum" id="3OCX"/>
<dbReference type="PDBsum" id="3OCY"/>
<dbReference type="PDBsum" id="3OCZ"/>
<dbReference type="PDBsum" id="3SF0"/>
<dbReference type="SMR" id="P26093"/>
<dbReference type="STRING" id="71421.HI_0693"/>
<dbReference type="EnsemblBacteria" id="AAC22353">
    <property type="protein sequence ID" value="AAC22353"/>
    <property type="gene ID" value="HI_0693"/>
</dbReference>
<dbReference type="KEGG" id="hin:HI_0693"/>
<dbReference type="PATRIC" id="fig|71421.8.peg.725"/>
<dbReference type="eggNOG" id="COG2503">
    <property type="taxonomic scope" value="Bacteria"/>
</dbReference>
<dbReference type="HOGENOM" id="CLU_052352_1_0_6"/>
<dbReference type="OrthoDB" id="395856at2"/>
<dbReference type="PhylomeDB" id="P26093"/>
<dbReference type="BioCyc" id="HINF71421:G1GJ1-728-MONOMER"/>
<dbReference type="BioCyc" id="MetaCyc:MONOMER-8381"/>
<dbReference type="BRENDA" id="3.1.3.2">
    <property type="organism ID" value="2529"/>
</dbReference>
<dbReference type="EvolutionaryTrace" id="P26093"/>
<dbReference type="Proteomes" id="UP000000579">
    <property type="component" value="Chromosome"/>
</dbReference>
<dbReference type="GO" id="GO:0009279">
    <property type="term" value="C:cell outer membrane"/>
    <property type="evidence" value="ECO:0007669"/>
    <property type="project" value="UniProtKB-SubCell"/>
</dbReference>
<dbReference type="CDD" id="cd07534">
    <property type="entry name" value="HAD_CAP"/>
    <property type="match status" value="1"/>
</dbReference>
<dbReference type="Gene3D" id="3.40.50.1000">
    <property type="entry name" value="HAD superfamily/HAD-like"/>
    <property type="match status" value="1"/>
</dbReference>
<dbReference type="InterPro" id="IPR005519">
    <property type="entry name" value="Acid_phosphat_B-like"/>
</dbReference>
<dbReference type="InterPro" id="IPR036412">
    <property type="entry name" value="HAD-like_sf"/>
</dbReference>
<dbReference type="InterPro" id="IPR023214">
    <property type="entry name" value="HAD_sf"/>
</dbReference>
<dbReference type="InterPro" id="IPR006423">
    <property type="entry name" value="Lipo_e_P4"/>
</dbReference>
<dbReference type="NCBIfam" id="TIGR01533">
    <property type="entry name" value="lipo_e_P4"/>
    <property type="match status" value="1"/>
</dbReference>
<dbReference type="PANTHER" id="PTHR31284">
    <property type="entry name" value="ACID PHOSPHATASE-LIKE PROTEIN"/>
    <property type="match status" value="1"/>
</dbReference>
<dbReference type="PANTHER" id="PTHR31284:SF10">
    <property type="entry name" value="ACID PHOSPHATASE-LIKE PROTEIN"/>
    <property type="match status" value="1"/>
</dbReference>
<dbReference type="Pfam" id="PF03767">
    <property type="entry name" value="Acid_phosphat_B"/>
    <property type="match status" value="1"/>
</dbReference>
<dbReference type="PIRSF" id="PIRSF019271">
    <property type="entry name" value="Acid_Ptase_C"/>
    <property type="match status" value="1"/>
</dbReference>
<dbReference type="SFLD" id="SFLDG01125">
    <property type="entry name" value="C1.1:_Acid_Phosphatase_Like"/>
    <property type="match status" value="1"/>
</dbReference>
<dbReference type="SFLD" id="SFLDS00003">
    <property type="entry name" value="Haloacid_Dehalogenase"/>
    <property type="match status" value="1"/>
</dbReference>
<dbReference type="SUPFAM" id="SSF56784">
    <property type="entry name" value="HAD-like"/>
    <property type="match status" value="1"/>
</dbReference>
<dbReference type="PROSITE" id="PS51257">
    <property type="entry name" value="PROKAR_LIPOPROTEIN"/>
    <property type="match status" value="1"/>
</dbReference>
<feature type="signal peptide">
    <location>
        <begin position="1"/>
        <end position="20"/>
    </location>
</feature>
<feature type="chain" id="PRO_0000018178" description="Lipoprotein E">
    <location>
        <begin position="21"/>
        <end position="274"/>
    </location>
</feature>
<feature type="lipid moiety-binding region" description="N-palmitoyl cysteine" evidence="1">
    <location>
        <position position="21"/>
    </location>
</feature>
<feature type="lipid moiety-binding region" description="S-diacylglycerol cysteine" evidence="1">
    <location>
        <position position="21"/>
    </location>
</feature>
<feature type="sequence conflict" description="In Ref. 1; AAA51009." evidence="1" ref="1">
    <original>G</original>
    <variation>E</variation>
    <location>
        <position position="30"/>
    </location>
</feature>
<feature type="helix" evidence="2">
    <location>
        <begin position="30"/>
        <end position="38"/>
    </location>
</feature>
<feature type="helix" evidence="2">
    <location>
        <begin position="41"/>
        <end position="49"/>
    </location>
</feature>
<feature type="helix" evidence="2">
    <location>
        <begin position="51"/>
        <end position="70"/>
    </location>
</feature>
<feature type="strand" evidence="2">
    <location>
        <begin position="78"/>
        <end position="83"/>
    </location>
</feature>
<feature type="turn" evidence="2">
    <location>
        <begin position="87"/>
        <end position="89"/>
    </location>
</feature>
<feature type="helix" evidence="2">
    <location>
        <begin position="93"/>
        <end position="102"/>
    </location>
</feature>
<feature type="helix" evidence="2">
    <location>
        <begin position="108"/>
        <end position="116"/>
    </location>
</feature>
<feature type="helix" evidence="2">
    <location>
        <begin position="126"/>
        <end position="135"/>
    </location>
</feature>
<feature type="strand" evidence="2">
    <location>
        <begin position="138"/>
        <end position="147"/>
    </location>
</feature>
<feature type="turn" evidence="2">
    <location>
        <begin position="148"/>
        <end position="151"/>
    </location>
</feature>
<feature type="helix" evidence="2">
    <location>
        <begin position="152"/>
        <end position="162"/>
    </location>
</feature>
<feature type="helix" evidence="2">
    <location>
        <begin position="169"/>
        <end position="171"/>
    </location>
</feature>
<feature type="strand" evidence="2">
    <location>
        <begin position="172"/>
        <end position="177"/>
    </location>
</feature>
<feature type="helix" evidence="2">
    <location>
        <begin position="182"/>
        <end position="190"/>
    </location>
</feature>
<feature type="strand" evidence="2">
    <location>
        <begin position="193"/>
        <end position="202"/>
    </location>
</feature>
<feature type="helix" evidence="2">
    <location>
        <begin position="203"/>
        <end position="206"/>
    </location>
</feature>
<feature type="turn" evidence="2">
    <location>
        <begin position="209"/>
        <end position="212"/>
    </location>
</feature>
<feature type="helix" evidence="2">
    <location>
        <begin position="215"/>
        <end position="224"/>
    </location>
</feature>
<feature type="helix" evidence="2">
    <location>
        <begin position="225"/>
        <end position="228"/>
    </location>
</feature>
<feature type="turn" evidence="2">
    <location>
        <begin position="230"/>
        <end position="232"/>
    </location>
</feature>
<feature type="strand" evidence="2">
    <location>
        <begin position="233"/>
        <end position="235"/>
    </location>
</feature>
<feature type="strand" evidence="3">
    <location>
        <begin position="239"/>
        <end position="242"/>
    </location>
</feature>
<feature type="helix" evidence="2">
    <location>
        <begin position="243"/>
        <end position="246"/>
    </location>
</feature>
<feature type="helix" evidence="2">
    <location>
        <begin position="252"/>
        <end position="254"/>
    </location>
</feature>
<feature type="helix" evidence="2">
    <location>
        <begin position="257"/>
        <end position="267"/>
    </location>
</feature>
<accession>P26093</accession>
<evidence type="ECO:0000305" key="1"/>
<evidence type="ECO:0007829" key="2">
    <source>
        <dbReference type="PDB" id="3OCU"/>
    </source>
</evidence>
<evidence type="ECO:0007829" key="3">
    <source>
        <dbReference type="PDB" id="3OCZ"/>
    </source>
</evidence>
<proteinExistence type="evidence at protein level"/>